<organism>
    <name type="scientific">Baumannia cicadellinicola subsp. Homalodisca coagulata</name>
    <dbReference type="NCBI Taxonomy" id="374463"/>
    <lineage>
        <taxon>Bacteria</taxon>
        <taxon>Pseudomonadati</taxon>
        <taxon>Pseudomonadota</taxon>
        <taxon>Gammaproteobacteria</taxon>
        <taxon>Candidatus Palibaumannia</taxon>
    </lineage>
</organism>
<protein>
    <recommendedName>
        <fullName evidence="1">1-deoxy-D-xylulose 5-phosphate reductoisomerase</fullName>
        <shortName evidence="1">DXP reductoisomerase</shortName>
        <ecNumber evidence="1">1.1.1.267</ecNumber>
    </recommendedName>
    <alternativeName>
        <fullName evidence="1">1-deoxyxylulose-5-phosphate reductoisomerase</fullName>
    </alternativeName>
    <alternativeName>
        <fullName evidence="1">2-C-methyl-D-erythritol 4-phosphate synthase</fullName>
    </alternativeName>
</protein>
<name>DXR_BAUCH</name>
<reference key="1">
    <citation type="journal article" date="2006" name="PLoS Biol.">
        <title>Metabolic complementarity and genomics of the dual bacterial symbiosis of sharpshooters.</title>
        <authorList>
            <person name="Wu D."/>
            <person name="Daugherty S.C."/>
            <person name="Van Aken S.E."/>
            <person name="Pai G.H."/>
            <person name="Watkins K.L."/>
            <person name="Khouri H."/>
            <person name="Tallon L.J."/>
            <person name="Zaborsky J.M."/>
            <person name="Dunbar H.E."/>
            <person name="Tran P.L."/>
            <person name="Moran N.A."/>
            <person name="Eisen J.A."/>
        </authorList>
    </citation>
    <scope>NUCLEOTIDE SEQUENCE [LARGE SCALE GENOMIC DNA]</scope>
</reference>
<accession>Q1LSV3</accession>
<comment type="function">
    <text evidence="1">Catalyzes the NADPH-dependent rearrangement and reduction of 1-deoxy-D-xylulose-5-phosphate (DXP) to 2-C-methyl-D-erythritol 4-phosphate (MEP).</text>
</comment>
<comment type="catalytic activity">
    <reaction evidence="1">
        <text>2-C-methyl-D-erythritol 4-phosphate + NADP(+) = 1-deoxy-D-xylulose 5-phosphate + NADPH + H(+)</text>
        <dbReference type="Rhea" id="RHEA:13717"/>
        <dbReference type="ChEBI" id="CHEBI:15378"/>
        <dbReference type="ChEBI" id="CHEBI:57783"/>
        <dbReference type="ChEBI" id="CHEBI:57792"/>
        <dbReference type="ChEBI" id="CHEBI:58262"/>
        <dbReference type="ChEBI" id="CHEBI:58349"/>
        <dbReference type="EC" id="1.1.1.267"/>
    </reaction>
    <physiologicalReaction direction="right-to-left" evidence="1">
        <dbReference type="Rhea" id="RHEA:13719"/>
    </physiologicalReaction>
</comment>
<comment type="cofactor">
    <cofactor evidence="1">
        <name>Mg(2+)</name>
        <dbReference type="ChEBI" id="CHEBI:18420"/>
    </cofactor>
    <cofactor evidence="1">
        <name>Mn(2+)</name>
        <dbReference type="ChEBI" id="CHEBI:29035"/>
    </cofactor>
</comment>
<comment type="pathway">
    <text evidence="1">Isoprenoid biosynthesis; isopentenyl diphosphate biosynthesis via DXP pathway; isopentenyl diphosphate from 1-deoxy-D-xylulose 5-phosphate: step 1/6.</text>
</comment>
<comment type="similarity">
    <text evidence="1">Belongs to the DXR family.</text>
</comment>
<feature type="chain" id="PRO_1000020218" description="1-deoxy-D-xylulose 5-phosphate reductoisomerase">
    <location>
        <begin position="1"/>
        <end position="398"/>
    </location>
</feature>
<feature type="binding site" evidence="1">
    <location>
        <position position="10"/>
    </location>
    <ligand>
        <name>NADPH</name>
        <dbReference type="ChEBI" id="CHEBI:57783"/>
    </ligand>
</feature>
<feature type="binding site" evidence="1">
    <location>
        <position position="11"/>
    </location>
    <ligand>
        <name>NADPH</name>
        <dbReference type="ChEBI" id="CHEBI:57783"/>
    </ligand>
</feature>
<feature type="binding site" evidence="1">
    <location>
        <position position="12"/>
    </location>
    <ligand>
        <name>NADPH</name>
        <dbReference type="ChEBI" id="CHEBI:57783"/>
    </ligand>
</feature>
<feature type="binding site" evidence="1">
    <location>
        <position position="13"/>
    </location>
    <ligand>
        <name>NADPH</name>
        <dbReference type="ChEBI" id="CHEBI:57783"/>
    </ligand>
</feature>
<feature type="binding site" evidence="1">
    <location>
        <position position="38"/>
    </location>
    <ligand>
        <name>NADPH</name>
        <dbReference type="ChEBI" id="CHEBI:57783"/>
    </ligand>
</feature>
<feature type="binding site" evidence="1">
    <location>
        <position position="124"/>
    </location>
    <ligand>
        <name>NADPH</name>
        <dbReference type="ChEBI" id="CHEBI:57783"/>
    </ligand>
</feature>
<feature type="binding site" evidence="1">
    <location>
        <position position="125"/>
    </location>
    <ligand>
        <name>1-deoxy-D-xylulose 5-phosphate</name>
        <dbReference type="ChEBI" id="CHEBI:57792"/>
    </ligand>
</feature>
<feature type="binding site" evidence="1">
    <location>
        <position position="126"/>
    </location>
    <ligand>
        <name>NADPH</name>
        <dbReference type="ChEBI" id="CHEBI:57783"/>
    </ligand>
</feature>
<feature type="binding site" evidence="1">
    <location>
        <position position="150"/>
    </location>
    <ligand>
        <name>Mn(2+)</name>
        <dbReference type="ChEBI" id="CHEBI:29035"/>
    </ligand>
</feature>
<feature type="binding site" evidence="1">
    <location>
        <position position="151"/>
    </location>
    <ligand>
        <name>1-deoxy-D-xylulose 5-phosphate</name>
        <dbReference type="ChEBI" id="CHEBI:57792"/>
    </ligand>
</feature>
<feature type="binding site" evidence="1">
    <location>
        <position position="152"/>
    </location>
    <ligand>
        <name>1-deoxy-D-xylulose 5-phosphate</name>
        <dbReference type="ChEBI" id="CHEBI:57792"/>
    </ligand>
</feature>
<feature type="binding site" evidence="1">
    <location>
        <position position="152"/>
    </location>
    <ligand>
        <name>Mn(2+)</name>
        <dbReference type="ChEBI" id="CHEBI:29035"/>
    </ligand>
</feature>
<feature type="binding site" evidence="1">
    <location>
        <position position="186"/>
    </location>
    <ligand>
        <name>1-deoxy-D-xylulose 5-phosphate</name>
        <dbReference type="ChEBI" id="CHEBI:57792"/>
    </ligand>
</feature>
<feature type="binding site" evidence="1">
    <location>
        <position position="209"/>
    </location>
    <ligand>
        <name>1-deoxy-D-xylulose 5-phosphate</name>
        <dbReference type="ChEBI" id="CHEBI:57792"/>
    </ligand>
</feature>
<feature type="binding site" evidence="1">
    <location>
        <position position="215"/>
    </location>
    <ligand>
        <name>NADPH</name>
        <dbReference type="ChEBI" id="CHEBI:57783"/>
    </ligand>
</feature>
<feature type="binding site" evidence="1">
    <location>
        <position position="222"/>
    </location>
    <ligand>
        <name>1-deoxy-D-xylulose 5-phosphate</name>
        <dbReference type="ChEBI" id="CHEBI:57792"/>
    </ligand>
</feature>
<feature type="binding site" evidence="1">
    <location>
        <position position="227"/>
    </location>
    <ligand>
        <name>1-deoxy-D-xylulose 5-phosphate</name>
        <dbReference type="ChEBI" id="CHEBI:57792"/>
    </ligand>
</feature>
<feature type="binding site" evidence="1">
    <location>
        <position position="228"/>
    </location>
    <ligand>
        <name>1-deoxy-D-xylulose 5-phosphate</name>
        <dbReference type="ChEBI" id="CHEBI:57792"/>
    </ligand>
</feature>
<feature type="binding site" evidence="1">
    <location>
        <position position="231"/>
    </location>
    <ligand>
        <name>1-deoxy-D-xylulose 5-phosphate</name>
        <dbReference type="ChEBI" id="CHEBI:57792"/>
    </ligand>
</feature>
<feature type="binding site" evidence="1">
    <location>
        <position position="231"/>
    </location>
    <ligand>
        <name>Mn(2+)</name>
        <dbReference type="ChEBI" id="CHEBI:29035"/>
    </ligand>
</feature>
<gene>
    <name evidence="1" type="primary">dxr</name>
    <name type="ordered locus">BCI_0531</name>
</gene>
<proteinExistence type="inferred from homology"/>
<sequence length="398" mass="43611">MKYLTILGSTGSIGTSTLTVIKQNPDKFTVRALVAKNNFTLMTKQCLDFRPSWVGMVDKRAARELKANLAQLGIAINIISGNQAACELAALKEIDTVMAAIAGVDGLLSTLSALRAGKRVLLANKESLVSCGRLFMNEVHQHNAQLLPVDSEHNAIFQILPEPIQRQLGCLSLSKYGVSQIILTGSGGPFRQTPLDALATITSDQACIHPNWSMGRKISVDSATMMNKGLEYIEARCLFNASTDQIEVLLHPQSIFHSMVRYVDGSVLAQLAYPDMRIPITYALSYPTRVPIKVTPLNFLQLGTLSFDQPDNKRYPCLQLAIEASKLGQAATTTLNAANEVAVAAFLQRKIRFTDIASVNQMVLDKINLEEPSSIEEVLCIDRQARINAHLSIRYLAL</sequence>
<dbReference type="EC" id="1.1.1.267" evidence="1"/>
<dbReference type="EMBL" id="CP000238">
    <property type="protein sequence ID" value="ABF14058.1"/>
    <property type="molecule type" value="Genomic_DNA"/>
</dbReference>
<dbReference type="RefSeq" id="WP_011520694.1">
    <property type="nucleotide sequence ID" value="NC_007984.1"/>
</dbReference>
<dbReference type="SMR" id="Q1LSV3"/>
<dbReference type="STRING" id="374463.BCI_0531"/>
<dbReference type="KEGG" id="bci:BCI_0531"/>
<dbReference type="HOGENOM" id="CLU_035714_0_1_6"/>
<dbReference type="OrthoDB" id="9806546at2"/>
<dbReference type="UniPathway" id="UPA00056">
    <property type="reaction ID" value="UER00092"/>
</dbReference>
<dbReference type="Proteomes" id="UP000002427">
    <property type="component" value="Chromosome"/>
</dbReference>
<dbReference type="GO" id="GO:0030604">
    <property type="term" value="F:1-deoxy-D-xylulose-5-phosphate reductoisomerase activity"/>
    <property type="evidence" value="ECO:0007669"/>
    <property type="project" value="UniProtKB-UniRule"/>
</dbReference>
<dbReference type="GO" id="GO:0030145">
    <property type="term" value="F:manganese ion binding"/>
    <property type="evidence" value="ECO:0007669"/>
    <property type="project" value="TreeGrafter"/>
</dbReference>
<dbReference type="GO" id="GO:0070402">
    <property type="term" value="F:NADPH binding"/>
    <property type="evidence" value="ECO:0007669"/>
    <property type="project" value="InterPro"/>
</dbReference>
<dbReference type="GO" id="GO:0051484">
    <property type="term" value="P:isopentenyl diphosphate biosynthetic process, methylerythritol 4-phosphate pathway involved in terpenoid biosynthetic process"/>
    <property type="evidence" value="ECO:0007669"/>
    <property type="project" value="TreeGrafter"/>
</dbReference>
<dbReference type="FunFam" id="1.10.1740.10:FF:000004">
    <property type="entry name" value="1-deoxy-D-xylulose 5-phosphate reductoisomerase"/>
    <property type="match status" value="1"/>
</dbReference>
<dbReference type="FunFam" id="3.40.50.720:FF:000045">
    <property type="entry name" value="1-deoxy-D-xylulose 5-phosphate reductoisomerase"/>
    <property type="match status" value="1"/>
</dbReference>
<dbReference type="Gene3D" id="1.10.1740.10">
    <property type="match status" value="1"/>
</dbReference>
<dbReference type="Gene3D" id="3.40.50.720">
    <property type="entry name" value="NAD(P)-binding Rossmann-like Domain"/>
    <property type="match status" value="1"/>
</dbReference>
<dbReference type="HAMAP" id="MF_00183">
    <property type="entry name" value="DXP_reductoisom"/>
    <property type="match status" value="1"/>
</dbReference>
<dbReference type="InterPro" id="IPR003821">
    <property type="entry name" value="DXP_reductoisomerase"/>
</dbReference>
<dbReference type="InterPro" id="IPR013644">
    <property type="entry name" value="DXP_reductoisomerase_C"/>
</dbReference>
<dbReference type="InterPro" id="IPR013512">
    <property type="entry name" value="DXP_reductoisomerase_N"/>
</dbReference>
<dbReference type="InterPro" id="IPR026877">
    <property type="entry name" value="DXPR_C"/>
</dbReference>
<dbReference type="InterPro" id="IPR036169">
    <property type="entry name" value="DXPR_C_sf"/>
</dbReference>
<dbReference type="InterPro" id="IPR036291">
    <property type="entry name" value="NAD(P)-bd_dom_sf"/>
</dbReference>
<dbReference type="NCBIfam" id="TIGR00243">
    <property type="entry name" value="Dxr"/>
    <property type="match status" value="1"/>
</dbReference>
<dbReference type="NCBIfam" id="NF003938">
    <property type="entry name" value="PRK05447.1-1"/>
    <property type="match status" value="1"/>
</dbReference>
<dbReference type="NCBIfam" id="NF009114">
    <property type="entry name" value="PRK12464.1"/>
    <property type="match status" value="1"/>
</dbReference>
<dbReference type="PANTHER" id="PTHR30525">
    <property type="entry name" value="1-DEOXY-D-XYLULOSE 5-PHOSPHATE REDUCTOISOMERASE"/>
    <property type="match status" value="1"/>
</dbReference>
<dbReference type="PANTHER" id="PTHR30525:SF0">
    <property type="entry name" value="1-DEOXY-D-XYLULOSE 5-PHOSPHATE REDUCTOISOMERASE, CHLOROPLASTIC"/>
    <property type="match status" value="1"/>
</dbReference>
<dbReference type="Pfam" id="PF08436">
    <property type="entry name" value="DXP_redisom_C"/>
    <property type="match status" value="1"/>
</dbReference>
<dbReference type="Pfam" id="PF02670">
    <property type="entry name" value="DXP_reductoisom"/>
    <property type="match status" value="1"/>
</dbReference>
<dbReference type="Pfam" id="PF13288">
    <property type="entry name" value="DXPR_C"/>
    <property type="match status" value="1"/>
</dbReference>
<dbReference type="PIRSF" id="PIRSF006205">
    <property type="entry name" value="Dxp_reductismrs"/>
    <property type="match status" value="1"/>
</dbReference>
<dbReference type="SUPFAM" id="SSF69055">
    <property type="entry name" value="1-deoxy-D-xylulose-5-phosphate reductoisomerase, C-terminal domain"/>
    <property type="match status" value="1"/>
</dbReference>
<dbReference type="SUPFAM" id="SSF55347">
    <property type="entry name" value="Glyceraldehyde-3-phosphate dehydrogenase-like, C-terminal domain"/>
    <property type="match status" value="1"/>
</dbReference>
<dbReference type="SUPFAM" id="SSF51735">
    <property type="entry name" value="NAD(P)-binding Rossmann-fold domains"/>
    <property type="match status" value="1"/>
</dbReference>
<keyword id="KW-0414">Isoprene biosynthesis</keyword>
<keyword id="KW-0464">Manganese</keyword>
<keyword id="KW-0479">Metal-binding</keyword>
<keyword id="KW-0521">NADP</keyword>
<keyword id="KW-0560">Oxidoreductase</keyword>
<keyword id="KW-1185">Reference proteome</keyword>
<evidence type="ECO:0000255" key="1">
    <source>
        <dbReference type="HAMAP-Rule" id="MF_00183"/>
    </source>
</evidence>